<feature type="chain" id="PRO_0000417999" description="UV-stimulated scaffold protein A homolog">
    <location>
        <begin position="1"/>
        <end position="594"/>
    </location>
</feature>
<feature type="zinc finger region" description="UVSSA-type" evidence="3">
    <location>
        <begin position="466"/>
        <end position="493"/>
    </location>
</feature>
<feature type="region of interest" description="VHS-like">
    <location>
        <begin position="24"/>
        <end position="170"/>
    </location>
</feature>
<feature type="region of interest" description="Disordered" evidence="4">
    <location>
        <begin position="533"/>
        <end position="558"/>
    </location>
</feature>
<feature type="coiled-coil region" evidence="2">
    <location>
        <begin position="170"/>
        <end position="198"/>
    </location>
</feature>
<feature type="coiled-coil region" evidence="2">
    <location>
        <begin position="503"/>
        <end position="540"/>
    </location>
</feature>
<feature type="compositionally biased region" description="Basic and acidic residues" evidence="4">
    <location>
        <begin position="544"/>
        <end position="558"/>
    </location>
</feature>
<feature type="binding site" evidence="3">
    <location>
        <position position="469"/>
    </location>
    <ligand>
        <name>Zn(2+)</name>
        <dbReference type="ChEBI" id="CHEBI:29105"/>
    </ligand>
</feature>
<feature type="binding site" evidence="3">
    <location>
        <position position="479"/>
    </location>
    <ligand>
        <name>Zn(2+)</name>
        <dbReference type="ChEBI" id="CHEBI:29105"/>
    </ligand>
</feature>
<feature type="binding site" evidence="3">
    <location>
        <position position="487"/>
    </location>
    <ligand>
        <name>Zn(2+)</name>
        <dbReference type="ChEBI" id="CHEBI:29105"/>
    </ligand>
</feature>
<feature type="binding site" evidence="3">
    <location>
        <position position="490"/>
    </location>
    <ligand>
        <name>Zn(2+)</name>
        <dbReference type="ChEBI" id="CHEBI:29105"/>
    </ligand>
</feature>
<name>UVSSA_CAEEL</name>
<sequence>MLKRRQPKYCSFMDSIDNSTTIIRKNLNRFIRELTDDGKLDFESIPYQNLQKEVANQDEEGCENVIEVLLDTTSRSGCPDRKLILQLFNSFFLQFPIFRENLLNDPSEFLELMFETNPIRNPLPGSKKHGNELKVEAITVIKSWEKEKCVKNDARMKCLVVTLKKTKFVDYENGAKKIEAERKRKKILEERKMKMIENSVNVYSSKYHEIKNDAETLSMELTTTMQMLVPSFTTADPEVPSTSTSTPSAISDSKSFEIFIPDLTPEISVSSENDAIVEAFLGAKLSLIHRVQTLRKLVKRLQLLKQPGEKLAQEIIDYRDGIKNLVLKADELRIINPRPPKNKRKKSDDDFIDVDISIDDILMVQYAEKLEVDVKSKDESEKITESPEKHKIEMKNEKPVKIKTVPFGLDLKYWGEERKDVEVPKNNADCHRFWRSADEGTVAGKAQQSIYTQRQYTFIGKAPDNRKVCLAKMKSGKLCPRKDYYTCPLHGKIVDRDDEGRPINEEDRLEENYRKEQNHLKEADKIRQMIEKEYESKTKRRKKHDVDTTASEDVRNRLQKKLLDPKTIQRVSADLDASRKNRLEKNFGQQFSHF</sequence>
<accession>Q23088</accession>
<dbReference type="EMBL" id="FO080684">
    <property type="protein sequence ID" value="CCD65778.1"/>
    <property type="molecule type" value="Genomic_DNA"/>
</dbReference>
<dbReference type="PIR" id="F89113">
    <property type="entry name" value="F89113"/>
</dbReference>
<dbReference type="RefSeq" id="NP_505012.2">
    <property type="nucleotide sequence ID" value="NM_072611.5"/>
</dbReference>
<dbReference type="SMR" id="Q23088"/>
<dbReference type="FunCoup" id="Q23088">
    <property type="interactions" value="1501"/>
</dbReference>
<dbReference type="STRING" id="6239.ZK742.2.1"/>
<dbReference type="PaxDb" id="6239-ZK742.2"/>
<dbReference type="EnsemblMetazoa" id="ZK742.2.1">
    <property type="protein sequence ID" value="ZK742.2.1"/>
    <property type="gene ID" value="WBGene00022812"/>
</dbReference>
<dbReference type="GeneID" id="179158"/>
<dbReference type="KEGG" id="cel:CELE_ZK742.2"/>
<dbReference type="UCSC" id="ZK742.2">
    <property type="organism name" value="c. elegans"/>
</dbReference>
<dbReference type="AGR" id="WB:WBGene00022812"/>
<dbReference type="CTD" id="179158"/>
<dbReference type="WormBase" id="ZK742.2">
    <property type="protein sequence ID" value="CE51871"/>
    <property type="gene ID" value="WBGene00022812"/>
    <property type="gene designation" value="uvs-1"/>
</dbReference>
<dbReference type="eggNOG" id="KOG2374">
    <property type="taxonomic scope" value="Eukaryota"/>
</dbReference>
<dbReference type="HOGENOM" id="CLU_023577_0_0_1"/>
<dbReference type="InParanoid" id="Q23088"/>
<dbReference type="OMA" id="KNNADCH"/>
<dbReference type="OrthoDB" id="5594015at2759"/>
<dbReference type="PhylomeDB" id="Q23088"/>
<dbReference type="Reactome" id="R-CEL-6781823">
    <property type="pathway name" value="Formation of TC-NER Pre-Incision Complex"/>
</dbReference>
<dbReference type="Reactome" id="R-CEL-6782135">
    <property type="pathway name" value="Dual incision in TC-NER"/>
</dbReference>
<dbReference type="Reactome" id="R-CEL-6782210">
    <property type="pathway name" value="Gap-filling DNA repair synthesis and ligation in TC-NER"/>
</dbReference>
<dbReference type="PRO" id="PR:Q23088"/>
<dbReference type="Proteomes" id="UP000001940">
    <property type="component" value="Chromosome V"/>
</dbReference>
<dbReference type="Bgee" id="WBGene00022812">
    <property type="expression patterns" value="Expressed in germ line (C elegans) and 4 other cell types or tissues"/>
</dbReference>
<dbReference type="GO" id="GO:0005694">
    <property type="term" value="C:chromosome"/>
    <property type="evidence" value="ECO:0000318"/>
    <property type="project" value="GO_Central"/>
</dbReference>
<dbReference type="GO" id="GO:0000993">
    <property type="term" value="F:RNA polymerase II complex binding"/>
    <property type="evidence" value="ECO:0000318"/>
    <property type="project" value="GO_Central"/>
</dbReference>
<dbReference type="GO" id="GO:0009411">
    <property type="term" value="P:response to UV"/>
    <property type="evidence" value="ECO:0000315"/>
    <property type="project" value="UniProtKB"/>
</dbReference>
<dbReference type="GO" id="GO:0006283">
    <property type="term" value="P:transcription-coupled nucleotide-excision repair"/>
    <property type="evidence" value="ECO:0000315"/>
    <property type="project" value="UniProtKB"/>
</dbReference>
<dbReference type="InterPro" id="IPR018610">
    <property type="entry name" value="UVSSA"/>
</dbReference>
<dbReference type="InterPro" id="IPR049431">
    <property type="entry name" value="UVSSA_C"/>
</dbReference>
<dbReference type="InterPro" id="IPR049408">
    <property type="entry name" value="UVSSA_N_a-solenoid_rpt"/>
</dbReference>
<dbReference type="PANTHER" id="PTHR28670">
    <property type="entry name" value="UV-STIMULATED SCAFFOLD PROTEIN A"/>
    <property type="match status" value="1"/>
</dbReference>
<dbReference type="PANTHER" id="PTHR28670:SF1">
    <property type="entry name" value="UV-STIMULATED SCAFFOLD PROTEIN A"/>
    <property type="match status" value="1"/>
</dbReference>
<dbReference type="Pfam" id="PF09740">
    <property type="entry name" value="DUF2043"/>
    <property type="match status" value="1"/>
</dbReference>
<dbReference type="Pfam" id="PF20867">
    <property type="entry name" value="UVSSA_N"/>
    <property type="match status" value="1"/>
</dbReference>
<dbReference type="PROSITE" id="PS52058">
    <property type="entry name" value="ZF_UVSSA"/>
    <property type="match status" value="1"/>
</dbReference>
<gene>
    <name evidence="5 8" type="primary">uvs-1</name>
    <name evidence="8" type="ORF">ZK742.2</name>
</gene>
<comment type="function">
    <text evidence="1 7">Factor involved in transcription-coupled nucleotide excision repair (TC-NER) in response to UV damage (PubMed:27043179). TC-NER allows RNA polymerase II-blocking lesions to be rapidly removed from the transcribed strand of active genes (By similarity).</text>
</comment>
<comment type="subcellular location">
    <subcellularLocation>
        <location evidence="1">Chromosome</location>
    </subcellularLocation>
    <text evidence="1">Accumulates at UV DNA damage sites.</text>
</comment>
<comment type="similarity">
    <text evidence="6">Belongs to the UVSSA family.</text>
</comment>
<evidence type="ECO:0000250" key="1">
    <source>
        <dbReference type="UniProtKB" id="Q2YD98"/>
    </source>
</evidence>
<evidence type="ECO:0000255" key="2"/>
<evidence type="ECO:0000255" key="3">
    <source>
        <dbReference type="PROSITE-ProRule" id="PRU01403"/>
    </source>
</evidence>
<evidence type="ECO:0000256" key="4">
    <source>
        <dbReference type="SAM" id="MobiDB-lite"/>
    </source>
</evidence>
<evidence type="ECO:0000303" key="5">
    <source>
    </source>
</evidence>
<evidence type="ECO:0000305" key="6"/>
<evidence type="ECO:0000305" key="7">
    <source>
    </source>
</evidence>
<evidence type="ECO:0000312" key="8">
    <source>
        <dbReference type="WormBase" id="ZK742.2"/>
    </source>
</evidence>
<proteinExistence type="inferred from homology"/>
<organism>
    <name type="scientific">Caenorhabditis elegans</name>
    <dbReference type="NCBI Taxonomy" id="6239"/>
    <lineage>
        <taxon>Eukaryota</taxon>
        <taxon>Metazoa</taxon>
        <taxon>Ecdysozoa</taxon>
        <taxon>Nematoda</taxon>
        <taxon>Chromadorea</taxon>
        <taxon>Rhabditida</taxon>
        <taxon>Rhabditina</taxon>
        <taxon>Rhabditomorpha</taxon>
        <taxon>Rhabditoidea</taxon>
        <taxon>Rhabditidae</taxon>
        <taxon>Peloderinae</taxon>
        <taxon>Caenorhabditis</taxon>
    </lineage>
</organism>
<keyword id="KW-0158">Chromosome</keyword>
<keyword id="KW-0175">Coiled coil</keyword>
<keyword id="KW-0227">DNA damage</keyword>
<keyword id="KW-0234">DNA repair</keyword>
<keyword id="KW-0479">Metal-binding</keyword>
<keyword id="KW-1185">Reference proteome</keyword>
<keyword id="KW-0862">Zinc</keyword>
<keyword id="KW-0863">Zinc-finger</keyword>
<reference key="1">
    <citation type="journal article" date="1998" name="Science">
        <title>Genome sequence of the nematode C. elegans: a platform for investigating biology.</title>
        <authorList>
            <consortium name="The C. elegans sequencing consortium"/>
        </authorList>
    </citation>
    <scope>NUCLEOTIDE SEQUENCE [LARGE SCALE GENOMIC DNA]</scope>
    <source>
        <strain>Bristol N2</strain>
    </source>
</reference>
<reference key="2">
    <citation type="journal article" date="2016" name="DNA Repair">
        <title>A C. elegans homolog for the UV-hypersensitivity syndrome disease gene UVSSA.</title>
        <authorList>
            <person name="Babu V."/>
            <person name="Schumacher B."/>
        </authorList>
    </citation>
    <scope>FUNCTION</scope>
</reference>
<protein>
    <recommendedName>
        <fullName>UV-stimulated scaffold protein A homolog</fullName>
    </recommendedName>
</protein>